<protein>
    <recommendedName>
        <fullName evidence="1">Thymidine phosphorylase</fullName>
        <ecNumber evidence="1">2.4.2.4</ecNumber>
    </recommendedName>
    <alternativeName>
        <fullName evidence="1">TdRPase</fullName>
    </alternativeName>
</protein>
<proteinExistence type="inferred from homology"/>
<organism>
    <name type="scientific">Salmonella gallinarum (strain 287/91 / NCTC 13346)</name>
    <dbReference type="NCBI Taxonomy" id="550538"/>
    <lineage>
        <taxon>Bacteria</taxon>
        <taxon>Pseudomonadati</taxon>
        <taxon>Pseudomonadota</taxon>
        <taxon>Gammaproteobacteria</taxon>
        <taxon>Enterobacterales</taxon>
        <taxon>Enterobacteriaceae</taxon>
        <taxon>Salmonella</taxon>
    </lineage>
</organism>
<comment type="function">
    <text evidence="1">The enzymes which catalyze the reversible phosphorolysis of pyrimidine nucleosides are involved in the degradation of these compounds and in their utilization as carbon and energy sources, or in the rescue of pyrimidine bases for nucleotide synthesis.</text>
</comment>
<comment type="catalytic activity">
    <reaction evidence="1">
        <text>thymidine + phosphate = 2-deoxy-alpha-D-ribose 1-phosphate + thymine</text>
        <dbReference type="Rhea" id="RHEA:16037"/>
        <dbReference type="ChEBI" id="CHEBI:17748"/>
        <dbReference type="ChEBI" id="CHEBI:17821"/>
        <dbReference type="ChEBI" id="CHEBI:43474"/>
        <dbReference type="ChEBI" id="CHEBI:57259"/>
        <dbReference type="EC" id="2.4.2.4"/>
    </reaction>
</comment>
<comment type="pathway">
    <text evidence="1">Pyrimidine metabolism; dTMP biosynthesis via salvage pathway; dTMP from thymine: step 1/2.</text>
</comment>
<comment type="subunit">
    <text evidence="1">Homodimer.</text>
</comment>
<comment type="similarity">
    <text evidence="1">Belongs to the thymidine/pyrimidine-nucleoside phosphorylase family.</text>
</comment>
<keyword id="KW-0328">Glycosyltransferase</keyword>
<keyword id="KW-0808">Transferase</keyword>
<reference key="1">
    <citation type="journal article" date="2008" name="Genome Res.">
        <title>Comparative genome analysis of Salmonella enteritidis PT4 and Salmonella gallinarum 287/91 provides insights into evolutionary and host adaptation pathways.</title>
        <authorList>
            <person name="Thomson N.R."/>
            <person name="Clayton D.J."/>
            <person name="Windhorst D."/>
            <person name="Vernikos G."/>
            <person name="Davidson S."/>
            <person name="Churcher C."/>
            <person name="Quail M.A."/>
            <person name="Stevens M."/>
            <person name="Jones M.A."/>
            <person name="Watson M."/>
            <person name="Barron A."/>
            <person name="Layton A."/>
            <person name="Pickard D."/>
            <person name="Kingsley R.A."/>
            <person name="Bignell A."/>
            <person name="Clark L."/>
            <person name="Harris B."/>
            <person name="Ormond D."/>
            <person name="Abdellah Z."/>
            <person name="Brooks K."/>
            <person name="Cherevach I."/>
            <person name="Chillingworth T."/>
            <person name="Woodward J."/>
            <person name="Norberczak H."/>
            <person name="Lord A."/>
            <person name="Arrowsmith C."/>
            <person name="Jagels K."/>
            <person name="Moule S."/>
            <person name="Mungall K."/>
            <person name="Saunders M."/>
            <person name="Whitehead S."/>
            <person name="Chabalgoity J.A."/>
            <person name="Maskell D."/>
            <person name="Humphreys T."/>
            <person name="Roberts M."/>
            <person name="Barrow P.A."/>
            <person name="Dougan G."/>
            <person name="Parkhill J."/>
        </authorList>
    </citation>
    <scope>NUCLEOTIDE SEQUENCE [LARGE SCALE GENOMIC DNA]</scope>
    <source>
        <strain>287/91 / NCTC 13346</strain>
    </source>
</reference>
<dbReference type="EC" id="2.4.2.4" evidence="1"/>
<dbReference type="EMBL" id="AM933173">
    <property type="protein sequence ID" value="CAR40156.1"/>
    <property type="molecule type" value="Genomic_DNA"/>
</dbReference>
<dbReference type="RefSeq" id="WP_000477838.1">
    <property type="nucleotide sequence ID" value="NC_011274.1"/>
</dbReference>
<dbReference type="SMR" id="B5R9V0"/>
<dbReference type="KEGG" id="seg:SG4394"/>
<dbReference type="HOGENOM" id="CLU_025040_0_1_6"/>
<dbReference type="UniPathway" id="UPA00578">
    <property type="reaction ID" value="UER00638"/>
</dbReference>
<dbReference type="Proteomes" id="UP000008321">
    <property type="component" value="Chromosome"/>
</dbReference>
<dbReference type="GO" id="GO:0005829">
    <property type="term" value="C:cytosol"/>
    <property type="evidence" value="ECO:0007669"/>
    <property type="project" value="TreeGrafter"/>
</dbReference>
<dbReference type="GO" id="GO:0004645">
    <property type="term" value="F:1,4-alpha-oligoglucan phosphorylase activity"/>
    <property type="evidence" value="ECO:0007669"/>
    <property type="project" value="InterPro"/>
</dbReference>
<dbReference type="GO" id="GO:0009032">
    <property type="term" value="F:thymidine phosphorylase activity"/>
    <property type="evidence" value="ECO:0007669"/>
    <property type="project" value="UniProtKB-UniRule"/>
</dbReference>
<dbReference type="GO" id="GO:0006206">
    <property type="term" value="P:pyrimidine nucleobase metabolic process"/>
    <property type="evidence" value="ECO:0007669"/>
    <property type="project" value="InterPro"/>
</dbReference>
<dbReference type="GO" id="GO:0046104">
    <property type="term" value="P:thymidine metabolic process"/>
    <property type="evidence" value="ECO:0007669"/>
    <property type="project" value="UniProtKB-UniRule"/>
</dbReference>
<dbReference type="FunFam" id="3.40.1030.10:FF:000001">
    <property type="entry name" value="Thymidine phosphorylase"/>
    <property type="match status" value="1"/>
</dbReference>
<dbReference type="FunFam" id="3.90.1170.30:FF:000001">
    <property type="entry name" value="Thymidine phosphorylase"/>
    <property type="match status" value="1"/>
</dbReference>
<dbReference type="Gene3D" id="3.40.1030.10">
    <property type="entry name" value="Nucleoside phosphorylase/phosphoribosyltransferase catalytic domain"/>
    <property type="match status" value="1"/>
</dbReference>
<dbReference type="Gene3D" id="3.90.1170.30">
    <property type="entry name" value="Pyrimidine nucleoside phosphorylase-like, C-terminal domain"/>
    <property type="match status" value="1"/>
</dbReference>
<dbReference type="Gene3D" id="1.20.970.10">
    <property type="entry name" value="Transferase, Pyrimidine Nucleoside Phosphorylase, Chain C"/>
    <property type="match status" value="1"/>
</dbReference>
<dbReference type="HAMAP" id="MF_01628">
    <property type="entry name" value="Thymid_phosp"/>
    <property type="match status" value="1"/>
</dbReference>
<dbReference type="InterPro" id="IPR000312">
    <property type="entry name" value="Glycosyl_Trfase_fam3"/>
</dbReference>
<dbReference type="InterPro" id="IPR017459">
    <property type="entry name" value="Glycosyl_Trfase_fam3_N_dom"/>
</dbReference>
<dbReference type="InterPro" id="IPR036320">
    <property type="entry name" value="Glycosyl_Trfase_fam3_N_dom_sf"/>
</dbReference>
<dbReference type="InterPro" id="IPR035902">
    <property type="entry name" value="Nuc_phospho_transferase"/>
</dbReference>
<dbReference type="InterPro" id="IPR036566">
    <property type="entry name" value="PYNP-like_C_sf"/>
</dbReference>
<dbReference type="InterPro" id="IPR013102">
    <property type="entry name" value="PYNP_C"/>
</dbReference>
<dbReference type="InterPro" id="IPR018090">
    <property type="entry name" value="Pyrmidine_PPas_bac/euk"/>
</dbReference>
<dbReference type="InterPro" id="IPR017872">
    <property type="entry name" value="Pyrmidine_PPase_CS"/>
</dbReference>
<dbReference type="InterPro" id="IPR000053">
    <property type="entry name" value="Thymidine/pyrmidine_PPase"/>
</dbReference>
<dbReference type="InterPro" id="IPR013465">
    <property type="entry name" value="Thymidine_Pase"/>
</dbReference>
<dbReference type="NCBIfam" id="NF004490">
    <property type="entry name" value="PRK05820.1"/>
    <property type="match status" value="1"/>
</dbReference>
<dbReference type="NCBIfam" id="TIGR02643">
    <property type="entry name" value="T_phosphoryl"/>
    <property type="match status" value="1"/>
</dbReference>
<dbReference type="NCBIfam" id="TIGR02644">
    <property type="entry name" value="Y_phosphoryl"/>
    <property type="match status" value="1"/>
</dbReference>
<dbReference type="PANTHER" id="PTHR10515">
    <property type="entry name" value="THYMIDINE PHOSPHORYLASE"/>
    <property type="match status" value="1"/>
</dbReference>
<dbReference type="PANTHER" id="PTHR10515:SF0">
    <property type="entry name" value="THYMIDINE PHOSPHORYLASE"/>
    <property type="match status" value="1"/>
</dbReference>
<dbReference type="Pfam" id="PF02885">
    <property type="entry name" value="Glycos_trans_3N"/>
    <property type="match status" value="1"/>
</dbReference>
<dbReference type="Pfam" id="PF00591">
    <property type="entry name" value="Glycos_transf_3"/>
    <property type="match status" value="1"/>
</dbReference>
<dbReference type="Pfam" id="PF07831">
    <property type="entry name" value="PYNP_C"/>
    <property type="match status" value="1"/>
</dbReference>
<dbReference type="PIRSF" id="PIRSF000478">
    <property type="entry name" value="TP_PyNP"/>
    <property type="match status" value="1"/>
</dbReference>
<dbReference type="SMART" id="SM00941">
    <property type="entry name" value="PYNP_C"/>
    <property type="match status" value="1"/>
</dbReference>
<dbReference type="SUPFAM" id="SSF52418">
    <property type="entry name" value="Nucleoside phosphorylase/phosphoribosyltransferase catalytic domain"/>
    <property type="match status" value="1"/>
</dbReference>
<dbReference type="SUPFAM" id="SSF47648">
    <property type="entry name" value="Nucleoside phosphorylase/phosphoribosyltransferase N-terminal domain"/>
    <property type="match status" value="1"/>
</dbReference>
<dbReference type="SUPFAM" id="SSF54680">
    <property type="entry name" value="Pyrimidine nucleoside phosphorylase C-terminal domain"/>
    <property type="match status" value="1"/>
</dbReference>
<dbReference type="PROSITE" id="PS00647">
    <property type="entry name" value="THYMID_PHOSPHORYLASE"/>
    <property type="match status" value="1"/>
</dbReference>
<sequence length="440" mass="47002">MFLAQEIIRKKRDGHALSDEEIRFFINGIRDNTISEGQIAALAMTIFFHDMTMPERVSLTMAMRDSGTVLDWKSLNLNGPIVDKHSTGGVGDVTSLMLGPMVAACGGYVPMISGRGLGHTGGTLDKLEAIPGFDIFPDDNRFREIIQDVGVAIIGQTSSLAPADKRFYATRDITATVDSIPLITGSILAKKLAEGLDALVMDVKVGSGAFMPTYELSEALAEAIVGVANGAGVRTTALLTDMNQVLASSAGNAVEVREAVQFLTGEYRNPRLFDVTMALCVEMLISGQLAKDDAEARAKLQAVLDNGKAAEVFGRMVAAQKGPSDFVENYDKYLPTAMLSKAVYADTEGFISAMDTRALGMAVVSMGGGRRQASDTIDYSVGFTDMARLGDSIDGQRPLAVIHAKDEASWQEAAKAVKAAIILDDKAPASTPSVYRRITE</sequence>
<gene>
    <name evidence="1" type="primary">deoA</name>
    <name type="ordered locus">SG4394</name>
</gene>
<name>TYPH_SALG2</name>
<evidence type="ECO:0000255" key="1">
    <source>
        <dbReference type="HAMAP-Rule" id="MF_01628"/>
    </source>
</evidence>
<accession>B5R9V0</accession>
<feature type="chain" id="PRO_1000186268" description="Thymidine phosphorylase">
    <location>
        <begin position="1"/>
        <end position="440"/>
    </location>
</feature>